<keyword id="KW-0067">ATP-binding</keyword>
<keyword id="KW-0418">Kinase</keyword>
<keyword id="KW-0460">Magnesium</keyword>
<keyword id="KW-0479">Metal-binding</keyword>
<keyword id="KW-0547">Nucleotide-binding</keyword>
<keyword id="KW-0784">Thiamine biosynthesis</keyword>
<keyword id="KW-0808">Transferase</keyword>
<accession>Q0T335</accession>
<reference key="1">
    <citation type="journal article" date="2006" name="BMC Genomics">
        <title>Complete genome sequence of Shigella flexneri 5b and comparison with Shigella flexneri 2a.</title>
        <authorList>
            <person name="Nie H."/>
            <person name="Yang F."/>
            <person name="Zhang X."/>
            <person name="Yang J."/>
            <person name="Chen L."/>
            <person name="Wang J."/>
            <person name="Xiong Z."/>
            <person name="Peng J."/>
            <person name="Sun L."/>
            <person name="Dong J."/>
            <person name="Xue Y."/>
            <person name="Xu X."/>
            <person name="Chen S."/>
            <person name="Yao Z."/>
            <person name="Shen Y."/>
            <person name="Jin Q."/>
        </authorList>
    </citation>
    <scope>NUCLEOTIDE SEQUENCE [LARGE SCALE GENOMIC DNA]</scope>
    <source>
        <strain>8401</strain>
    </source>
</reference>
<protein>
    <recommendedName>
        <fullName evidence="1">Hydroxyethylthiazole kinase</fullName>
        <ecNumber evidence="1">2.7.1.50</ecNumber>
    </recommendedName>
    <alternativeName>
        <fullName evidence="1">4-methyl-5-beta-hydroxyethylthiazole kinase</fullName>
        <shortName evidence="1">TH kinase</shortName>
        <shortName evidence="1">Thz kinase</shortName>
    </alternativeName>
</protein>
<sequence>MQVDLLSSAQSAHALHLFHQHSPLVHCMTNDVVQTFTANTLLALGASPAMVIETEEASQFAAIASALLINVGTLTQPRAQAMRAAVEQAKSSQTRWTLDPVAVGALDYRRHFCHELLSFKPAAIRGNASEIMALAGIANGGRGVDTTDAAANAIPAAQTLARETGAIVVVTGEVDYVTDGHRIIGIHGGDPLMTKVVGTGCALSAVVAACCALPGDTLENVASACHWMKQAGERAVARSEGPGSFVPHFLDALWQLTQEVQA</sequence>
<proteinExistence type="inferred from homology"/>
<evidence type="ECO:0000255" key="1">
    <source>
        <dbReference type="HAMAP-Rule" id="MF_00228"/>
    </source>
</evidence>
<organism>
    <name type="scientific">Shigella flexneri serotype 5b (strain 8401)</name>
    <dbReference type="NCBI Taxonomy" id="373384"/>
    <lineage>
        <taxon>Bacteria</taxon>
        <taxon>Pseudomonadati</taxon>
        <taxon>Pseudomonadota</taxon>
        <taxon>Gammaproteobacteria</taxon>
        <taxon>Enterobacterales</taxon>
        <taxon>Enterobacteriaceae</taxon>
        <taxon>Shigella</taxon>
    </lineage>
</organism>
<gene>
    <name evidence="1" type="primary">thiM</name>
    <name type="ordered locus">SFV_2159</name>
</gene>
<comment type="function">
    <text evidence="1">Catalyzes the phosphorylation of the hydroxyl group of 4-methyl-5-beta-hydroxyethylthiazole (THZ).</text>
</comment>
<comment type="catalytic activity">
    <reaction evidence="1">
        <text>5-(2-hydroxyethyl)-4-methylthiazole + ATP = 4-methyl-5-(2-phosphooxyethyl)-thiazole + ADP + H(+)</text>
        <dbReference type="Rhea" id="RHEA:24212"/>
        <dbReference type="ChEBI" id="CHEBI:15378"/>
        <dbReference type="ChEBI" id="CHEBI:17957"/>
        <dbReference type="ChEBI" id="CHEBI:30616"/>
        <dbReference type="ChEBI" id="CHEBI:58296"/>
        <dbReference type="ChEBI" id="CHEBI:456216"/>
        <dbReference type="EC" id="2.7.1.50"/>
    </reaction>
</comment>
<comment type="cofactor">
    <cofactor evidence="1">
        <name>Mg(2+)</name>
        <dbReference type="ChEBI" id="CHEBI:18420"/>
    </cofactor>
</comment>
<comment type="pathway">
    <text evidence="1">Cofactor biosynthesis; thiamine diphosphate biosynthesis; 4-methyl-5-(2-phosphoethyl)-thiazole from 5-(2-hydroxyethyl)-4-methylthiazole: step 1/1.</text>
</comment>
<comment type="similarity">
    <text evidence="1">Belongs to the Thz kinase family.</text>
</comment>
<name>THIM_SHIF8</name>
<dbReference type="EC" id="2.7.1.50" evidence="1"/>
<dbReference type="EMBL" id="CP000266">
    <property type="protein sequence ID" value="ABF04280.1"/>
    <property type="molecule type" value="Genomic_DNA"/>
</dbReference>
<dbReference type="RefSeq" id="WP_001195611.1">
    <property type="nucleotide sequence ID" value="NC_008258.1"/>
</dbReference>
<dbReference type="SMR" id="Q0T335"/>
<dbReference type="KEGG" id="sfv:SFV_2159"/>
<dbReference type="HOGENOM" id="CLU_019943_0_1_6"/>
<dbReference type="UniPathway" id="UPA00060">
    <property type="reaction ID" value="UER00139"/>
</dbReference>
<dbReference type="Proteomes" id="UP000000659">
    <property type="component" value="Chromosome"/>
</dbReference>
<dbReference type="GO" id="GO:0005524">
    <property type="term" value="F:ATP binding"/>
    <property type="evidence" value="ECO:0007669"/>
    <property type="project" value="UniProtKB-UniRule"/>
</dbReference>
<dbReference type="GO" id="GO:0004417">
    <property type="term" value="F:hydroxyethylthiazole kinase activity"/>
    <property type="evidence" value="ECO:0007669"/>
    <property type="project" value="UniProtKB-UniRule"/>
</dbReference>
<dbReference type="GO" id="GO:0000287">
    <property type="term" value="F:magnesium ion binding"/>
    <property type="evidence" value="ECO:0007669"/>
    <property type="project" value="UniProtKB-UniRule"/>
</dbReference>
<dbReference type="GO" id="GO:0009228">
    <property type="term" value="P:thiamine biosynthetic process"/>
    <property type="evidence" value="ECO:0007669"/>
    <property type="project" value="UniProtKB-KW"/>
</dbReference>
<dbReference type="GO" id="GO:0009229">
    <property type="term" value="P:thiamine diphosphate biosynthetic process"/>
    <property type="evidence" value="ECO:0007669"/>
    <property type="project" value="UniProtKB-UniRule"/>
</dbReference>
<dbReference type="CDD" id="cd01170">
    <property type="entry name" value="THZ_kinase"/>
    <property type="match status" value="1"/>
</dbReference>
<dbReference type="FunFam" id="3.40.1190.20:FF:000015">
    <property type="entry name" value="Hydroxyethylthiazole kinase"/>
    <property type="match status" value="1"/>
</dbReference>
<dbReference type="Gene3D" id="3.40.1190.20">
    <property type="match status" value="1"/>
</dbReference>
<dbReference type="HAMAP" id="MF_00228">
    <property type="entry name" value="Thz_kinase"/>
    <property type="match status" value="1"/>
</dbReference>
<dbReference type="InterPro" id="IPR000417">
    <property type="entry name" value="Hyethyz_kinase"/>
</dbReference>
<dbReference type="InterPro" id="IPR029056">
    <property type="entry name" value="Ribokinase-like"/>
</dbReference>
<dbReference type="NCBIfam" id="NF006830">
    <property type="entry name" value="PRK09355.1"/>
    <property type="match status" value="1"/>
</dbReference>
<dbReference type="NCBIfam" id="TIGR00694">
    <property type="entry name" value="thiM"/>
    <property type="match status" value="1"/>
</dbReference>
<dbReference type="Pfam" id="PF02110">
    <property type="entry name" value="HK"/>
    <property type="match status" value="1"/>
</dbReference>
<dbReference type="PIRSF" id="PIRSF000513">
    <property type="entry name" value="Thz_kinase"/>
    <property type="match status" value="1"/>
</dbReference>
<dbReference type="PRINTS" id="PR01099">
    <property type="entry name" value="HYETHTZKNASE"/>
</dbReference>
<dbReference type="SUPFAM" id="SSF53613">
    <property type="entry name" value="Ribokinase-like"/>
    <property type="match status" value="1"/>
</dbReference>
<feature type="chain" id="PRO_1000021529" description="Hydroxyethylthiazole kinase">
    <location>
        <begin position="1"/>
        <end position="262"/>
    </location>
</feature>
<feature type="binding site" evidence="1">
    <location>
        <position position="50"/>
    </location>
    <ligand>
        <name>substrate</name>
    </ligand>
</feature>
<feature type="binding site" evidence="1">
    <location>
        <position position="125"/>
    </location>
    <ligand>
        <name>ATP</name>
        <dbReference type="ChEBI" id="CHEBI:30616"/>
    </ligand>
</feature>
<feature type="binding site" evidence="1">
    <location>
        <position position="171"/>
    </location>
    <ligand>
        <name>ATP</name>
        <dbReference type="ChEBI" id="CHEBI:30616"/>
    </ligand>
</feature>
<feature type="binding site" evidence="1">
    <location>
        <position position="198"/>
    </location>
    <ligand>
        <name>substrate</name>
    </ligand>
</feature>